<keyword id="KW-1015">Disulfide bond</keyword>
<keyword id="KW-0372">Hormone</keyword>
<keyword id="KW-0479">Metal-binding</keyword>
<keyword id="KW-0873">Pyrrolidone carboxylic acid</keyword>
<keyword id="KW-0964">Secreted</keyword>
<keyword id="KW-0732">Signal</keyword>
<keyword id="KW-0862">Zinc</keyword>
<name>SOMA_SOLSE</name>
<feature type="signal peptide" evidence="1">
    <location>
        <begin position="1"/>
        <end position="17"/>
    </location>
</feature>
<feature type="chain" id="PRO_0000033056" description="Somatotropin">
    <location>
        <begin position="18"/>
        <end position="203"/>
    </location>
</feature>
<feature type="binding site" evidence="1">
    <location>
        <position position="35"/>
    </location>
    <ligand>
        <name>Zn(2+)</name>
        <dbReference type="ChEBI" id="CHEBI:29105"/>
    </ligand>
</feature>
<feature type="binding site" evidence="1">
    <location>
        <position position="185"/>
    </location>
    <ligand>
        <name>Zn(2+)</name>
        <dbReference type="ChEBI" id="CHEBI:29105"/>
    </ligand>
</feature>
<feature type="modified residue" description="Pyrrolidone carboxylic acid" evidence="1">
    <location>
        <position position="18"/>
    </location>
</feature>
<feature type="disulfide bond" evidence="1">
    <location>
        <begin position="68"/>
        <end position="176"/>
    </location>
</feature>
<feature type="disulfide bond" evidence="1">
    <location>
        <begin position="193"/>
        <end position="201"/>
    </location>
</feature>
<evidence type="ECO:0000250" key="1"/>
<evidence type="ECO:0000305" key="2"/>
<accession>P45643</accession>
<sequence length="203" mass="23238">MDRVVIVLSVLSVAASSQSILDQRRFSIAVSRVQHIHLLAQKYFSDFESSLQTEDQRQVNKIFLQDFCNSDDIISPIDKHDTQRSSVLKLLSISVRLIESWEFSSRFVTWSTFPRNQISHKLSELKTGIRMLIEANQDGAEVFSDSSTFQLAPYGNFYQSLGGDESLRRNYELLACFKKDMHKVETYLTVAKCRLSPEANCTL</sequence>
<protein>
    <recommendedName>
        <fullName>Somatotropin</fullName>
    </recommendedName>
    <alternativeName>
        <fullName>Growth hormone</fullName>
    </alternativeName>
</protein>
<dbReference type="EMBL" id="U01143">
    <property type="protein sequence ID" value="AAA60372.1"/>
    <property type="molecule type" value="mRNA"/>
</dbReference>
<dbReference type="PIR" id="I51363">
    <property type="entry name" value="I51363"/>
</dbReference>
<dbReference type="SMR" id="P45643"/>
<dbReference type="GO" id="GO:0005615">
    <property type="term" value="C:extracellular space"/>
    <property type="evidence" value="ECO:0007669"/>
    <property type="project" value="InterPro"/>
</dbReference>
<dbReference type="GO" id="GO:0070186">
    <property type="term" value="F:growth hormone activity"/>
    <property type="evidence" value="ECO:0007669"/>
    <property type="project" value="TreeGrafter"/>
</dbReference>
<dbReference type="GO" id="GO:0005131">
    <property type="term" value="F:growth hormone receptor binding"/>
    <property type="evidence" value="ECO:0007669"/>
    <property type="project" value="InterPro"/>
</dbReference>
<dbReference type="GO" id="GO:0046872">
    <property type="term" value="F:metal ion binding"/>
    <property type="evidence" value="ECO:0007669"/>
    <property type="project" value="UniProtKB-KW"/>
</dbReference>
<dbReference type="GO" id="GO:0048513">
    <property type="term" value="P:animal organ development"/>
    <property type="evidence" value="ECO:0007669"/>
    <property type="project" value="TreeGrafter"/>
</dbReference>
<dbReference type="GO" id="GO:0060396">
    <property type="term" value="P:growth hormone receptor signaling pathway"/>
    <property type="evidence" value="ECO:0007669"/>
    <property type="project" value="TreeGrafter"/>
</dbReference>
<dbReference type="GO" id="GO:0045927">
    <property type="term" value="P:positive regulation of growth"/>
    <property type="evidence" value="ECO:0007669"/>
    <property type="project" value="TreeGrafter"/>
</dbReference>
<dbReference type="GO" id="GO:0046427">
    <property type="term" value="P:positive regulation of receptor signaling pathway via JAK-STAT"/>
    <property type="evidence" value="ECO:0007669"/>
    <property type="project" value="TreeGrafter"/>
</dbReference>
<dbReference type="GO" id="GO:0031667">
    <property type="term" value="P:response to nutrient levels"/>
    <property type="evidence" value="ECO:0007669"/>
    <property type="project" value="TreeGrafter"/>
</dbReference>
<dbReference type="CDD" id="cd10285">
    <property type="entry name" value="somatotropin_like"/>
    <property type="match status" value="1"/>
</dbReference>
<dbReference type="FunFam" id="1.20.1250.10:FF:000009">
    <property type="entry name" value="Growth hormone"/>
    <property type="match status" value="1"/>
</dbReference>
<dbReference type="Gene3D" id="1.20.1250.10">
    <property type="match status" value="1"/>
</dbReference>
<dbReference type="InterPro" id="IPR009079">
    <property type="entry name" value="4_helix_cytokine-like_core"/>
</dbReference>
<dbReference type="InterPro" id="IPR034975">
    <property type="entry name" value="Somatotropin"/>
</dbReference>
<dbReference type="InterPro" id="IPR001400">
    <property type="entry name" value="Somatotropin/Prolactin"/>
</dbReference>
<dbReference type="InterPro" id="IPR018116">
    <property type="entry name" value="Somatotropin_CS"/>
</dbReference>
<dbReference type="PANTHER" id="PTHR11417:SF2">
    <property type="entry name" value="SOMATOTROPIN"/>
    <property type="match status" value="1"/>
</dbReference>
<dbReference type="PANTHER" id="PTHR11417">
    <property type="entry name" value="SOMATOTROPIN,PROLACTIN"/>
    <property type="match status" value="1"/>
</dbReference>
<dbReference type="Pfam" id="PF00103">
    <property type="entry name" value="Hormone_1"/>
    <property type="match status" value="1"/>
</dbReference>
<dbReference type="PRINTS" id="PR00836">
    <property type="entry name" value="SOMATOTROPIN"/>
</dbReference>
<dbReference type="SUPFAM" id="SSF47266">
    <property type="entry name" value="4-helical cytokines"/>
    <property type="match status" value="1"/>
</dbReference>
<dbReference type="PROSITE" id="PS00266">
    <property type="entry name" value="SOMATOTROPIN_1"/>
    <property type="match status" value="1"/>
</dbReference>
<dbReference type="PROSITE" id="PS00338">
    <property type="entry name" value="SOMATOTROPIN_2"/>
    <property type="match status" value="1"/>
</dbReference>
<proteinExistence type="evidence at transcript level"/>
<comment type="function">
    <text>Growth hormone plays an important role in growth control and is involved in the regulation of several anabolic processes. Implicated as an osmoregulatory substance important for seawater adaptation.</text>
</comment>
<comment type="subcellular location">
    <subcellularLocation>
        <location>Secreted</location>
    </subcellularLocation>
</comment>
<comment type="similarity">
    <text evidence="2">Belongs to the somatotropin/prolactin family.</text>
</comment>
<organism>
    <name type="scientific">Solea senegalensis</name>
    <name type="common">Senegalese sole</name>
    <dbReference type="NCBI Taxonomy" id="28829"/>
    <lineage>
        <taxon>Eukaryota</taxon>
        <taxon>Metazoa</taxon>
        <taxon>Chordata</taxon>
        <taxon>Craniata</taxon>
        <taxon>Vertebrata</taxon>
        <taxon>Euteleostomi</taxon>
        <taxon>Actinopterygii</taxon>
        <taxon>Neopterygii</taxon>
        <taxon>Teleostei</taxon>
        <taxon>Neoteleostei</taxon>
        <taxon>Acanthomorphata</taxon>
        <taxon>Carangaria</taxon>
        <taxon>Pleuronectiformes</taxon>
        <taxon>Pleuronectoidei</taxon>
        <taxon>Soleidae</taxon>
        <taxon>Solea</taxon>
    </lineage>
</organism>
<gene>
    <name type="primary">gh</name>
</gene>
<reference key="1">
    <citation type="journal article" date="1994" name="Gene">
        <title>Cloning of the sole (Solea senegalensis) growth hormone-encoding cDNA.</title>
        <authorList>
            <person name="Pendon C."/>
            <person name="Martinez-Barbera J.-P."/>
            <person name="Perez-Sanchez J."/>
            <person name="Rodriguez R.B."/>
            <person name="Grenett H."/>
            <person name="Valdivia M.M."/>
        </authorList>
    </citation>
    <scope>NUCLEOTIDE SEQUENCE [MRNA]</scope>
    <source>
        <tissue>Pituitary</tissue>
    </source>
</reference>